<accession>A9NEF7</accession>
<sequence length="38" mass="4534">MKVKASVKKRSADDIIVRRKGRVYVINKKNRRHNQRQG</sequence>
<proteinExistence type="inferred from homology"/>
<dbReference type="EMBL" id="CP000896">
    <property type="protein sequence ID" value="ABX80737.1"/>
    <property type="molecule type" value="Genomic_DNA"/>
</dbReference>
<dbReference type="RefSeq" id="WP_012242068.1">
    <property type="nucleotide sequence ID" value="NC_010163.1"/>
</dbReference>
<dbReference type="SMR" id="A9NEF7"/>
<dbReference type="STRING" id="441768.ACL_0111"/>
<dbReference type="GeneID" id="41338313"/>
<dbReference type="KEGG" id="acl:ACL_0111"/>
<dbReference type="eggNOG" id="COG0257">
    <property type="taxonomic scope" value="Bacteria"/>
</dbReference>
<dbReference type="HOGENOM" id="CLU_135723_3_3_14"/>
<dbReference type="OrthoDB" id="9801558at2"/>
<dbReference type="Proteomes" id="UP000008558">
    <property type="component" value="Chromosome"/>
</dbReference>
<dbReference type="GO" id="GO:1990904">
    <property type="term" value="C:ribonucleoprotein complex"/>
    <property type="evidence" value="ECO:0007669"/>
    <property type="project" value="UniProtKB-KW"/>
</dbReference>
<dbReference type="GO" id="GO:0005840">
    <property type="term" value="C:ribosome"/>
    <property type="evidence" value="ECO:0007669"/>
    <property type="project" value="UniProtKB-KW"/>
</dbReference>
<dbReference type="GO" id="GO:0003735">
    <property type="term" value="F:structural constituent of ribosome"/>
    <property type="evidence" value="ECO:0007669"/>
    <property type="project" value="InterPro"/>
</dbReference>
<dbReference type="GO" id="GO:0006412">
    <property type="term" value="P:translation"/>
    <property type="evidence" value="ECO:0007669"/>
    <property type="project" value="UniProtKB-UniRule"/>
</dbReference>
<dbReference type="HAMAP" id="MF_00251">
    <property type="entry name" value="Ribosomal_bL36"/>
    <property type="match status" value="1"/>
</dbReference>
<dbReference type="InterPro" id="IPR000473">
    <property type="entry name" value="Ribosomal_bL36"/>
</dbReference>
<dbReference type="InterPro" id="IPR035977">
    <property type="entry name" value="Ribosomal_bL36_sp"/>
</dbReference>
<dbReference type="NCBIfam" id="TIGR01022">
    <property type="entry name" value="rpmJ_bact"/>
    <property type="match status" value="1"/>
</dbReference>
<dbReference type="Pfam" id="PF00444">
    <property type="entry name" value="Ribosomal_L36"/>
    <property type="match status" value="1"/>
</dbReference>
<dbReference type="SUPFAM" id="SSF57840">
    <property type="entry name" value="Ribosomal protein L36"/>
    <property type="match status" value="1"/>
</dbReference>
<dbReference type="PROSITE" id="PS00828">
    <property type="entry name" value="RIBOSOMAL_L36"/>
    <property type="match status" value="1"/>
</dbReference>
<feature type="chain" id="PRO_0000344631" description="Large ribosomal subunit protein bL36">
    <location>
        <begin position="1"/>
        <end position="38"/>
    </location>
</feature>
<gene>
    <name evidence="1" type="primary">rpmJ</name>
    <name type="ordered locus">ACL_0111</name>
</gene>
<reference key="1">
    <citation type="journal article" date="2011" name="J. Bacteriol.">
        <title>Complete genome and proteome of Acholeplasma laidlawii.</title>
        <authorList>
            <person name="Lazarev V.N."/>
            <person name="Levitskii S.A."/>
            <person name="Basovskii Y.I."/>
            <person name="Chukin M.M."/>
            <person name="Akopian T.A."/>
            <person name="Vereshchagin V.V."/>
            <person name="Kostrjukova E.S."/>
            <person name="Kovaleva G.Y."/>
            <person name="Kazanov M.D."/>
            <person name="Malko D.B."/>
            <person name="Vitreschak A.G."/>
            <person name="Sernova N.V."/>
            <person name="Gelfand M.S."/>
            <person name="Demina I.A."/>
            <person name="Serebryakova M.V."/>
            <person name="Galyamina M.A."/>
            <person name="Vtyurin N.N."/>
            <person name="Rogov S.I."/>
            <person name="Alexeev D.G."/>
            <person name="Ladygina V.G."/>
            <person name="Govorun V.M."/>
        </authorList>
    </citation>
    <scope>NUCLEOTIDE SEQUENCE [LARGE SCALE GENOMIC DNA]</scope>
    <source>
        <strain>PG-8A</strain>
    </source>
</reference>
<keyword id="KW-1185">Reference proteome</keyword>
<keyword id="KW-0687">Ribonucleoprotein</keyword>
<keyword id="KW-0689">Ribosomal protein</keyword>
<comment type="similarity">
    <text evidence="1">Belongs to the bacterial ribosomal protein bL36 family.</text>
</comment>
<organism>
    <name type="scientific">Acholeplasma laidlawii (strain PG-8A)</name>
    <dbReference type="NCBI Taxonomy" id="441768"/>
    <lineage>
        <taxon>Bacteria</taxon>
        <taxon>Bacillati</taxon>
        <taxon>Mycoplasmatota</taxon>
        <taxon>Mollicutes</taxon>
        <taxon>Acholeplasmatales</taxon>
        <taxon>Acholeplasmataceae</taxon>
        <taxon>Acholeplasma</taxon>
    </lineage>
</organism>
<evidence type="ECO:0000255" key="1">
    <source>
        <dbReference type="HAMAP-Rule" id="MF_00251"/>
    </source>
</evidence>
<evidence type="ECO:0000305" key="2"/>
<name>RL36_ACHLI</name>
<protein>
    <recommendedName>
        <fullName evidence="1">Large ribosomal subunit protein bL36</fullName>
    </recommendedName>
    <alternativeName>
        <fullName evidence="2">50S ribosomal protein L36</fullName>
    </alternativeName>
</protein>